<name>PCD19_MOUSE</name>
<feature type="signal peptide" evidence="2">
    <location>
        <begin position="1"/>
        <end position="21"/>
    </location>
</feature>
<feature type="chain" id="PRO_0000004004" description="Protocadherin-19">
    <location>
        <begin position="22"/>
        <end position="1145"/>
    </location>
</feature>
<feature type="topological domain" description="Extracellular" evidence="2">
    <location>
        <begin position="22"/>
        <end position="678"/>
    </location>
</feature>
<feature type="transmembrane region" description="Helical" evidence="2">
    <location>
        <begin position="679"/>
        <end position="699"/>
    </location>
</feature>
<feature type="topological domain" description="Cytoplasmic" evidence="2">
    <location>
        <begin position="700"/>
        <end position="1145"/>
    </location>
</feature>
<feature type="domain" description="Cadherin 1" evidence="3">
    <location>
        <begin position="22"/>
        <end position="129"/>
    </location>
</feature>
<feature type="domain" description="Cadherin 2" evidence="3">
    <location>
        <begin position="130"/>
        <end position="238"/>
    </location>
</feature>
<feature type="domain" description="Cadherin 3" evidence="3">
    <location>
        <begin position="239"/>
        <end position="346"/>
    </location>
</feature>
<feature type="domain" description="Cadherin 4" evidence="3">
    <location>
        <begin position="350"/>
        <end position="453"/>
    </location>
</feature>
<feature type="domain" description="Cadherin 5" evidence="3">
    <location>
        <begin position="454"/>
        <end position="563"/>
    </location>
</feature>
<feature type="domain" description="Cadherin 6" evidence="3">
    <location>
        <begin position="569"/>
        <end position="672"/>
    </location>
</feature>
<feature type="region of interest" description="Disordered" evidence="4">
    <location>
        <begin position="901"/>
        <end position="921"/>
    </location>
</feature>
<feature type="region of interest" description="Disordered" evidence="4">
    <location>
        <begin position="1094"/>
        <end position="1145"/>
    </location>
</feature>
<feature type="compositionally biased region" description="Basic and acidic residues" evidence="4">
    <location>
        <begin position="906"/>
        <end position="921"/>
    </location>
</feature>
<feature type="compositionally biased region" description="Basic and acidic residues" evidence="4">
    <location>
        <begin position="1106"/>
        <end position="1145"/>
    </location>
</feature>
<feature type="binding site" evidence="1">
    <location>
        <position position="31"/>
    </location>
    <ligand>
        <name>Ca(2+)</name>
        <dbReference type="ChEBI" id="CHEBI:29108"/>
        <label>1</label>
    </ligand>
</feature>
<feature type="binding site" evidence="1">
    <location>
        <position position="31"/>
    </location>
    <ligand>
        <name>Ca(2+)</name>
        <dbReference type="ChEBI" id="CHEBI:29108"/>
        <label>2</label>
    </ligand>
</feature>
<feature type="binding site" evidence="1">
    <location>
        <position position="32"/>
    </location>
    <ligand>
        <name>Ca(2+)</name>
        <dbReference type="ChEBI" id="CHEBI:29108"/>
        <label>1</label>
    </ligand>
</feature>
<feature type="binding site" evidence="1">
    <location>
        <position position="88"/>
    </location>
    <ligand>
        <name>Ca(2+)</name>
        <dbReference type="ChEBI" id="CHEBI:29108"/>
        <label>1</label>
    </ligand>
</feature>
<feature type="binding site" evidence="1">
    <location>
        <position position="90"/>
    </location>
    <ligand>
        <name>Ca(2+)</name>
        <dbReference type="ChEBI" id="CHEBI:29108"/>
        <label>1</label>
    </ligand>
</feature>
<feature type="binding site" evidence="1">
    <location>
        <position position="90"/>
    </location>
    <ligand>
        <name>Ca(2+)</name>
        <dbReference type="ChEBI" id="CHEBI:29108"/>
        <label>2</label>
    </ligand>
</feature>
<feature type="binding site" evidence="1">
    <location>
        <position position="121"/>
    </location>
    <ligand>
        <name>Ca(2+)</name>
        <dbReference type="ChEBI" id="CHEBI:29108"/>
        <label>2</label>
    </ligand>
</feature>
<feature type="binding site" evidence="1">
    <location>
        <position position="123"/>
    </location>
    <ligand>
        <name>Ca(2+)</name>
        <dbReference type="ChEBI" id="CHEBI:29108"/>
        <label>3</label>
    </ligand>
</feature>
<feature type="binding site" evidence="1">
    <location>
        <position position="124"/>
    </location>
    <ligand>
        <name>Ca(2+)</name>
        <dbReference type="ChEBI" id="CHEBI:29108"/>
        <label>1</label>
    </ligand>
</feature>
<feature type="binding site" evidence="1">
    <location>
        <position position="124"/>
    </location>
    <ligand>
        <name>Ca(2+)</name>
        <dbReference type="ChEBI" id="CHEBI:29108"/>
        <label>2</label>
    </ligand>
</feature>
<feature type="binding site" evidence="1">
    <location>
        <position position="125"/>
    </location>
    <ligand>
        <name>Ca(2+)</name>
        <dbReference type="ChEBI" id="CHEBI:29108"/>
        <label>3</label>
    </ligand>
</feature>
<feature type="binding site" evidence="1">
    <location>
        <position position="140"/>
    </location>
    <ligand>
        <name>Ca(2+)</name>
        <dbReference type="ChEBI" id="CHEBI:29108"/>
        <label>4</label>
    </ligand>
</feature>
<feature type="binding site" evidence="1">
    <location>
        <position position="140"/>
    </location>
    <ligand>
        <name>Ca(2+)</name>
        <dbReference type="ChEBI" id="CHEBI:29108"/>
        <label>5</label>
    </ligand>
</feature>
<feature type="binding site" evidence="1">
    <location>
        <position position="155"/>
    </location>
    <ligand>
        <name>Ca(2+)</name>
        <dbReference type="ChEBI" id="CHEBI:29108"/>
        <label>3</label>
    </ligand>
</feature>
<feature type="binding site" evidence="1">
    <location>
        <position position="157"/>
    </location>
    <ligand>
        <name>Ca(2+)</name>
        <dbReference type="ChEBI" id="CHEBI:29108"/>
        <label>2</label>
    </ligand>
</feature>
<feature type="binding site" evidence="1">
    <location>
        <position position="157"/>
    </location>
    <ligand>
        <name>Ca(2+)</name>
        <dbReference type="ChEBI" id="CHEBI:29108"/>
        <label>3</label>
    </ligand>
</feature>
<feature type="binding site" evidence="1">
    <location>
        <position position="199"/>
    </location>
    <ligand>
        <name>Ca(2+)</name>
        <dbReference type="ChEBI" id="CHEBI:29108"/>
        <label>4</label>
    </ligand>
</feature>
<feature type="binding site" evidence="1">
    <location>
        <position position="199"/>
    </location>
    <ligand>
        <name>Ca(2+)</name>
        <dbReference type="ChEBI" id="CHEBI:29108"/>
        <label>5</label>
    </ligand>
</feature>
<feature type="binding site" evidence="1">
    <location>
        <position position="212"/>
    </location>
    <ligand>
        <name>Ca(2+)</name>
        <dbReference type="ChEBI" id="CHEBI:29108"/>
        <label>3</label>
    </ligand>
</feature>
<feature type="binding site" evidence="1">
    <location>
        <position position="230"/>
    </location>
    <ligand>
        <name>Ca(2+)</name>
        <dbReference type="ChEBI" id="CHEBI:29108"/>
        <label>5</label>
    </ligand>
</feature>
<feature type="binding site" evidence="1">
    <location>
        <position position="231"/>
    </location>
    <ligand>
        <name>Ca(2+)</name>
        <dbReference type="ChEBI" id="CHEBI:29108"/>
        <label>5</label>
    </ligand>
</feature>
<feature type="binding site" evidence="1">
    <location>
        <position position="232"/>
    </location>
    <ligand>
        <name>Ca(2+)</name>
        <dbReference type="ChEBI" id="CHEBI:29108"/>
        <label>6</label>
    </ligand>
</feature>
<feature type="binding site" evidence="1">
    <location>
        <position position="233"/>
    </location>
    <ligand>
        <name>Ca(2+)</name>
        <dbReference type="ChEBI" id="CHEBI:29108"/>
        <label>4</label>
    </ligand>
</feature>
<feature type="binding site" evidence="1">
    <location>
        <position position="233"/>
    </location>
    <ligand>
        <name>Ca(2+)</name>
        <dbReference type="ChEBI" id="CHEBI:29108"/>
        <label>5</label>
    </ligand>
</feature>
<feature type="binding site" evidence="1">
    <location>
        <position position="234"/>
    </location>
    <ligand>
        <name>Ca(2+)</name>
        <dbReference type="ChEBI" id="CHEBI:29108"/>
        <label>6</label>
    </ligand>
</feature>
<feature type="binding site" evidence="1">
    <location>
        <position position="249"/>
    </location>
    <ligand>
        <name>Ca(2+)</name>
        <dbReference type="ChEBI" id="CHEBI:29108"/>
        <label>7</label>
    </ligand>
</feature>
<feature type="binding site" evidence="1">
    <location>
        <position position="249"/>
    </location>
    <ligand>
        <name>Ca(2+)</name>
        <dbReference type="ChEBI" id="CHEBI:29108"/>
        <label>8</label>
    </ligand>
</feature>
<feature type="binding site" evidence="1">
    <location>
        <position position="264"/>
    </location>
    <ligand>
        <name>Ca(2+)</name>
        <dbReference type="ChEBI" id="CHEBI:29108"/>
        <label>6</label>
    </ligand>
</feature>
<feature type="binding site" evidence="1">
    <location>
        <position position="266"/>
    </location>
    <ligand>
        <name>Ca(2+)</name>
        <dbReference type="ChEBI" id="CHEBI:29108"/>
        <label>5</label>
    </ligand>
</feature>
<feature type="binding site" evidence="1">
    <location>
        <position position="266"/>
    </location>
    <ligand>
        <name>Ca(2+)</name>
        <dbReference type="ChEBI" id="CHEBI:29108"/>
        <label>6</label>
    </ligand>
</feature>
<feature type="binding site" evidence="1">
    <location>
        <position position="270"/>
    </location>
    <ligand>
        <name>Ca(2+)</name>
        <dbReference type="ChEBI" id="CHEBI:29108"/>
        <label>6</label>
    </ligand>
</feature>
<feature type="binding site" evidence="1">
    <location>
        <position position="305"/>
    </location>
    <ligand>
        <name>Ca(2+)</name>
        <dbReference type="ChEBI" id="CHEBI:29108"/>
        <label>7</label>
    </ligand>
</feature>
<feature type="binding site" evidence="1">
    <location>
        <position position="307"/>
    </location>
    <ligand>
        <name>Ca(2+)</name>
        <dbReference type="ChEBI" id="CHEBI:29108"/>
        <label>7</label>
    </ligand>
</feature>
<feature type="binding site" evidence="1">
    <location>
        <position position="307"/>
    </location>
    <ligand>
        <name>Ca(2+)</name>
        <dbReference type="ChEBI" id="CHEBI:29108"/>
        <label>8</label>
    </ligand>
</feature>
<feature type="binding site" evidence="1">
    <location>
        <position position="338"/>
    </location>
    <ligand>
        <name>Ca(2+)</name>
        <dbReference type="ChEBI" id="CHEBI:29108"/>
        <label>8</label>
    </ligand>
</feature>
<feature type="binding site" evidence="1">
    <location>
        <position position="340"/>
    </location>
    <ligand>
        <name>Ca(2+)</name>
        <dbReference type="ChEBI" id="CHEBI:29108"/>
        <label>9</label>
    </ligand>
</feature>
<feature type="binding site" evidence="1">
    <location>
        <position position="341"/>
    </location>
    <ligand>
        <name>Ca(2+)</name>
        <dbReference type="ChEBI" id="CHEBI:29108"/>
        <label>7</label>
    </ligand>
</feature>
<feature type="binding site" evidence="1">
    <location>
        <position position="341"/>
    </location>
    <ligand>
        <name>Ca(2+)</name>
        <dbReference type="ChEBI" id="CHEBI:29108"/>
        <label>8</label>
    </ligand>
</feature>
<feature type="binding site" evidence="1">
    <location>
        <position position="342"/>
    </location>
    <ligand>
        <name>Ca(2+)</name>
        <dbReference type="ChEBI" id="CHEBI:29108"/>
        <label>7</label>
    </ligand>
</feature>
<feature type="binding site" evidence="1">
    <location>
        <position position="342"/>
    </location>
    <ligand>
        <name>Ca(2+)</name>
        <dbReference type="ChEBI" id="CHEBI:29108"/>
        <label>9</label>
    </ligand>
</feature>
<feature type="binding site" evidence="1">
    <location>
        <position position="360"/>
    </location>
    <ligand>
        <name>Ca(2+)</name>
        <dbReference type="ChEBI" id="CHEBI:29108"/>
        <label>10</label>
    </ligand>
</feature>
<feature type="binding site" evidence="1">
    <location>
        <position position="360"/>
    </location>
    <ligand>
        <name>Ca(2+)</name>
        <dbReference type="ChEBI" id="CHEBI:29108"/>
        <label>11</label>
    </ligand>
</feature>
<feature type="binding site" evidence="1">
    <location>
        <position position="375"/>
    </location>
    <ligand>
        <name>Ca(2+)</name>
        <dbReference type="ChEBI" id="CHEBI:29108"/>
        <label>9</label>
    </ligand>
</feature>
<feature type="binding site" evidence="1">
    <location>
        <position position="377"/>
    </location>
    <ligand>
        <name>Ca(2+)</name>
        <dbReference type="ChEBI" id="CHEBI:29108"/>
        <label>8</label>
    </ligand>
</feature>
<feature type="binding site" evidence="1">
    <location>
        <position position="377"/>
    </location>
    <ligand>
        <name>Ca(2+)</name>
        <dbReference type="ChEBI" id="CHEBI:29108"/>
        <label>9</label>
    </ligand>
</feature>
<feature type="binding site" evidence="1">
    <location>
        <position position="381"/>
    </location>
    <ligand>
        <name>Ca(2+)</name>
        <dbReference type="ChEBI" id="CHEBI:29108"/>
        <label>9</label>
    </ligand>
</feature>
<feature type="binding site" evidence="1">
    <location>
        <position position="412"/>
    </location>
    <ligand>
        <name>Ca(2+)</name>
        <dbReference type="ChEBI" id="CHEBI:29108"/>
        <label>10</label>
    </ligand>
</feature>
<feature type="binding site" evidence="1">
    <location>
        <position position="414"/>
    </location>
    <ligand>
        <name>Ca(2+)</name>
        <dbReference type="ChEBI" id="CHEBI:29108"/>
        <label>10</label>
    </ligand>
</feature>
<feature type="binding site" evidence="1">
    <location>
        <position position="414"/>
    </location>
    <ligand>
        <name>Ca(2+)</name>
        <dbReference type="ChEBI" id="CHEBI:29108"/>
        <label>11</label>
    </ligand>
</feature>
<feature type="binding site" evidence="1">
    <location>
        <position position="427"/>
    </location>
    <ligand>
        <name>Ca(2+)</name>
        <dbReference type="ChEBI" id="CHEBI:29108"/>
        <label>9</label>
    </ligand>
</feature>
<feature type="binding site" evidence="1">
    <location>
        <position position="445"/>
    </location>
    <ligand>
        <name>Ca(2+)</name>
        <dbReference type="ChEBI" id="CHEBI:29108"/>
        <label>11</label>
    </ligand>
</feature>
<feature type="binding site" evidence="1">
    <location>
        <position position="446"/>
    </location>
    <ligand>
        <name>Ca(2+)</name>
        <dbReference type="ChEBI" id="CHEBI:29108"/>
        <label>11</label>
    </ligand>
</feature>
<feature type="binding site" evidence="1">
    <location>
        <position position="447"/>
    </location>
    <ligand>
        <name>Ca(2+)</name>
        <dbReference type="ChEBI" id="CHEBI:29108"/>
        <label>12</label>
    </ligand>
</feature>
<feature type="binding site" evidence="1">
    <location>
        <position position="448"/>
    </location>
    <ligand>
        <name>Ca(2+)</name>
        <dbReference type="ChEBI" id="CHEBI:29108"/>
        <label>10</label>
    </ligand>
</feature>
<feature type="binding site" evidence="1">
    <location>
        <position position="448"/>
    </location>
    <ligand>
        <name>Ca(2+)</name>
        <dbReference type="ChEBI" id="CHEBI:29108"/>
        <label>11</label>
    </ligand>
</feature>
<feature type="binding site" evidence="1">
    <location>
        <position position="449"/>
    </location>
    <ligand>
        <name>Ca(2+)</name>
        <dbReference type="ChEBI" id="CHEBI:29108"/>
        <label>12</label>
    </ligand>
</feature>
<feature type="binding site" evidence="1">
    <location>
        <position position="464"/>
    </location>
    <ligand>
        <name>Ca(2+)</name>
        <dbReference type="ChEBI" id="CHEBI:29108"/>
        <label>13</label>
    </ligand>
</feature>
<feature type="binding site" evidence="1">
    <location>
        <position position="464"/>
    </location>
    <ligand>
        <name>Ca(2+)</name>
        <dbReference type="ChEBI" id="CHEBI:29108"/>
        <label>14</label>
    </ligand>
</feature>
<feature type="binding site" evidence="1">
    <location>
        <position position="479"/>
    </location>
    <ligand>
        <name>Ca(2+)</name>
        <dbReference type="ChEBI" id="CHEBI:29108"/>
        <label>12</label>
    </ligand>
</feature>
<feature type="binding site" evidence="1">
    <location>
        <position position="481"/>
    </location>
    <ligand>
        <name>Ca(2+)</name>
        <dbReference type="ChEBI" id="CHEBI:29108"/>
        <label>11</label>
    </ligand>
</feature>
<feature type="binding site" evidence="1">
    <location>
        <position position="481"/>
    </location>
    <ligand>
        <name>Ca(2+)</name>
        <dbReference type="ChEBI" id="CHEBI:29108"/>
        <label>12</label>
    </ligand>
</feature>
<feature type="binding site" evidence="1">
    <location>
        <position position="485"/>
    </location>
    <ligand>
        <name>Ca(2+)</name>
        <dbReference type="ChEBI" id="CHEBI:29108"/>
        <label>12</label>
    </ligand>
</feature>
<feature type="binding site" evidence="1">
    <location>
        <position position="522"/>
    </location>
    <ligand>
        <name>Ca(2+)</name>
        <dbReference type="ChEBI" id="CHEBI:29108"/>
        <label>13</label>
    </ligand>
</feature>
<feature type="binding site" evidence="1">
    <location>
        <position position="524"/>
    </location>
    <ligand>
        <name>Ca(2+)</name>
        <dbReference type="ChEBI" id="CHEBI:29108"/>
        <label>13</label>
    </ligand>
</feature>
<feature type="binding site" evidence="1">
    <location>
        <position position="524"/>
    </location>
    <ligand>
        <name>Ca(2+)</name>
        <dbReference type="ChEBI" id="CHEBI:29108"/>
        <label>14</label>
    </ligand>
</feature>
<feature type="binding site" evidence="1">
    <location>
        <position position="537"/>
    </location>
    <ligand>
        <name>Ca(2+)</name>
        <dbReference type="ChEBI" id="CHEBI:29108"/>
        <label>12</label>
    </ligand>
</feature>
<feature type="binding site" evidence="1">
    <location>
        <position position="555"/>
    </location>
    <ligand>
        <name>Ca(2+)</name>
        <dbReference type="ChEBI" id="CHEBI:29108"/>
        <label>14</label>
    </ligand>
</feature>
<feature type="binding site" evidence="1">
    <location>
        <position position="556"/>
    </location>
    <ligand>
        <name>Ca(2+)</name>
        <dbReference type="ChEBI" id="CHEBI:29108"/>
        <label>14</label>
    </ligand>
</feature>
<feature type="binding site" evidence="1">
    <location>
        <position position="557"/>
    </location>
    <ligand>
        <name>Ca(2+)</name>
        <dbReference type="ChEBI" id="CHEBI:29108"/>
        <label>15</label>
    </ligand>
</feature>
<feature type="binding site" evidence="1">
    <location>
        <position position="558"/>
    </location>
    <ligand>
        <name>Ca(2+)</name>
        <dbReference type="ChEBI" id="CHEBI:29108"/>
        <label>13</label>
    </ligand>
</feature>
<feature type="binding site" evidence="1">
    <location>
        <position position="558"/>
    </location>
    <ligand>
        <name>Ca(2+)</name>
        <dbReference type="ChEBI" id="CHEBI:29108"/>
        <label>14</label>
    </ligand>
</feature>
<feature type="binding site" evidence="1">
    <location>
        <position position="559"/>
    </location>
    <ligand>
        <name>Ca(2+)</name>
        <dbReference type="ChEBI" id="CHEBI:29108"/>
        <label>13</label>
    </ligand>
</feature>
<feature type="binding site" evidence="1">
    <location>
        <position position="559"/>
    </location>
    <ligand>
        <name>Ca(2+)</name>
        <dbReference type="ChEBI" id="CHEBI:29108"/>
        <label>15</label>
    </ligand>
</feature>
<feature type="binding site" evidence="1">
    <location>
        <position position="594"/>
    </location>
    <ligand>
        <name>Ca(2+)</name>
        <dbReference type="ChEBI" id="CHEBI:29108"/>
        <label>15</label>
    </ligand>
</feature>
<feature type="binding site" evidence="1">
    <location>
        <position position="596"/>
    </location>
    <ligand>
        <name>Ca(2+)</name>
        <dbReference type="ChEBI" id="CHEBI:29108"/>
        <label>14</label>
    </ligand>
</feature>
<feature type="binding site" evidence="1">
    <location>
        <position position="596"/>
    </location>
    <ligand>
        <name>Ca(2+)</name>
        <dbReference type="ChEBI" id="CHEBI:29108"/>
        <label>15</label>
    </ligand>
</feature>
<feature type="binding site" evidence="1">
    <location>
        <position position="600"/>
    </location>
    <ligand>
        <name>Ca(2+)</name>
        <dbReference type="ChEBI" id="CHEBI:29108"/>
        <label>15</label>
    </ligand>
</feature>
<feature type="binding site" evidence="1">
    <location>
        <position position="646"/>
    </location>
    <ligand>
        <name>Ca(2+)</name>
        <dbReference type="ChEBI" id="CHEBI:29108"/>
        <label>15</label>
    </ligand>
</feature>
<feature type="glycosylation site" description="N-linked (GlcNAc...) asparagine" evidence="2">
    <location>
        <position position="261"/>
    </location>
</feature>
<feature type="glycosylation site" description="N-linked (GlcNAc...) asparagine" evidence="2">
    <location>
        <position position="420"/>
    </location>
</feature>
<feature type="glycosylation site" description="N-linked (GlcNAc...) asparagine" evidence="2">
    <location>
        <position position="485"/>
    </location>
</feature>
<feature type="glycosylation site" description="N-linked (GlcNAc...) asparagine" evidence="2">
    <location>
        <position position="546"/>
    </location>
</feature>
<feature type="glycosylation site" description="N-linked (GlcNAc...) asparagine" evidence="2">
    <location>
        <position position="570"/>
    </location>
</feature>
<feature type="glycosylation site" description="N-linked (GlcNAc...) asparagine" evidence="2">
    <location>
        <position position="676"/>
    </location>
</feature>
<feature type="disulfide bond" evidence="1">
    <location>
        <begin position="93"/>
        <end position="99"/>
    </location>
</feature>
<feature type="sequence conflict" description="In Ref. 2; BAC32847." evidence="5" ref="2">
    <original>V</original>
    <variation>D</variation>
    <location>
        <position position="114"/>
    </location>
</feature>
<feature type="sequence conflict" description="In Ref. 2; BAC32847." evidence="5" ref="2">
    <original>S</original>
    <variation>T</variation>
    <location>
        <position position="128"/>
    </location>
</feature>
<feature type="sequence conflict" description="In Ref. 2; BAC32847." evidence="5" ref="2">
    <original>E</original>
    <variation>Q</variation>
    <location>
        <position position="135"/>
    </location>
</feature>
<protein>
    <recommendedName>
        <fullName>Protocadherin-19</fullName>
    </recommendedName>
</protein>
<evidence type="ECO:0000250" key="1">
    <source>
        <dbReference type="UniProtKB" id="F8W3X3"/>
    </source>
</evidence>
<evidence type="ECO:0000255" key="2"/>
<evidence type="ECO:0000255" key="3">
    <source>
        <dbReference type="PROSITE-ProRule" id="PRU00043"/>
    </source>
</evidence>
<evidence type="ECO:0000256" key="4">
    <source>
        <dbReference type="SAM" id="MobiDB-lite"/>
    </source>
</evidence>
<evidence type="ECO:0000305" key="5"/>
<accession>Q80TF3</accession>
<accession>A2AGW3</accession>
<accession>Q8BL13</accession>
<dbReference type="EMBL" id="AL713863">
    <property type="status" value="NOT_ANNOTATED_CDS"/>
    <property type="molecule type" value="Genomic_DNA"/>
</dbReference>
<dbReference type="EMBL" id="AK046726">
    <property type="protein sequence ID" value="BAC32847.1"/>
    <property type="status" value="ALT_FRAME"/>
    <property type="molecule type" value="mRNA"/>
</dbReference>
<dbReference type="EMBL" id="AK122492">
    <property type="protein sequence ID" value="BAC65774.1"/>
    <property type="molecule type" value="mRNA"/>
</dbReference>
<dbReference type="CCDS" id="CCDS41117.1"/>
<dbReference type="RefSeq" id="NP_001098715.1">
    <property type="nucleotide sequence ID" value="NM_001105245.1"/>
</dbReference>
<dbReference type="RefSeq" id="NP_001098716.1">
    <property type="nucleotide sequence ID" value="NM_001105246.1"/>
</dbReference>
<dbReference type="SMR" id="Q80TF3"/>
<dbReference type="BioGRID" id="235010">
    <property type="interactions" value="1"/>
</dbReference>
<dbReference type="FunCoup" id="Q80TF3">
    <property type="interactions" value="519"/>
</dbReference>
<dbReference type="STRING" id="10090.ENSMUSP00000116886"/>
<dbReference type="GlyConnect" id="2650">
    <property type="glycosylation" value="3 N-Linked glycans (2 sites)"/>
</dbReference>
<dbReference type="GlyCosmos" id="Q80TF3">
    <property type="glycosylation" value="6 sites, 3 glycans"/>
</dbReference>
<dbReference type="GlyGen" id="Q80TF3">
    <property type="glycosylation" value="7 sites, 7 N-linked glycans (4 sites)"/>
</dbReference>
<dbReference type="iPTMnet" id="Q80TF3"/>
<dbReference type="PhosphoSitePlus" id="Q80TF3"/>
<dbReference type="PaxDb" id="10090-ENSMUSP00000116886"/>
<dbReference type="ProteomicsDB" id="287800"/>
<dbReference type="Pumba" id="Q80TF3"/>
<dbReference type="Antibodypedia" id="429">
    <property type="antibodies" value="42 antibodies from 16 providers"/>
</dbReference>
<dbReference type="Ensembl" id="ENSMUST00000149154.8">
    <property type="protein sequence ID" value="ENSMUSP00000116886.2"/>
    <property type="gene ID" value="ENSMUSG00000051323.17"/>
</dbReference>
<dbReference type="GeneID" id="279653"/>
<dbReference type="KEGG" id="mmu:279653"/>
<dbReference type="UCSC" id="uc009uew.2">
    <property type="organism name" value="mouse"/>
</dbReference>
<dbReference type="AGR" id="MGI:2685563"/>
<dbReference type="CTD" id="57526"/>
<dbReference type="MGI" id="MGI:2685563">
    <property type="gene designation" value="Pcdh19"/>
</dbReference>
<dbReference type="VEuPathDB" id="HostDB:ENSMUSG00000051323"/>
<dbReference type="eggNOG" id="KOG3594">
    <property type="taxonomic scope" value="Eukaryota"/>
</dbReference>
<dbReference type="GeneTree" id="ENSGT00940000159162"/>
<dbReference type="InParanoid" id="Q80TF3"/>
<dbReference type="OMA" id="RCWMPRG"/>
<dbReference type="OrthoDB" id="6252479at2759"/>
<dbReference type="PhylomeDB" id="Q80TF3"/>
<dbReference type="TreeFam" id="TF352008"/>
<dbReference type="BioGRID-ORCS" id="279653">
    <property type="hits" value="2 hits in 76 CRISPR screens"/>
</dbReference>
<dbReference type="ChiTaRS" id="Pcdh19">
    <property type="organism name" value="mouse"/>
</dbReference>
<dbReference type="PRO" id="PR:Q80TF3"/>
<dbReference type="Proteomes" id="UP000000589">
    <property type="component" value="Chromosome X"/>
</dbReference>
<dbReference type="RNAct" id="Q80TF3">
    <property type="molecule type" value="protein"/>
</dbReference>
<dbReference type="Bgee" id="ENSMUSG00000051323">
    <property type="expression patterns" value="Expressed in subiculum and 224 other cell types or tissues"/>
</dbReference>
<dbReference type="ExpressionAtlas" id="Q80TF3">
    <property type="expression patterns" value="baseline and differential"/>
</dbReference>
<dbReference type="GO" id="GO:0005886">
    <property type="term" value="C:plasma membrane"/>
    <property type="evidence" value="ECO:0000304"/>
    <property type="project" value="Reactome"/>
</dbReference>
<dbReference type="GO" id="GO:0005509">
    <property type="term" value="F:calcium ion binding"/>
    <property type="evidence" value="ECO:0007669"/>
    <property type="project" value="InterPro"/>
</dbReference>
<dbReference type="GO" id="GO:0007156">
    <property type="term" value="P:homophilic cell adhesion via plasma membrane adhesion molecules"/>
    <property type="evidence" value="ECO:0007669"/>
    <property type="project" value="InterPro"/>
</dbReference>
<dbReference type="CDD" id="cd11304">
    <property type="entry name" value="Cadherin_repeat"/>
    <property type="match status" value="6"/>
</dbReference>
<dbReference type="FunFam" id="2.60.40.60:FF:000001">
    <property type="entry name" value="Protocadherin alpha 2"/>
    <property type="match status" value="1"/>
</dbReference>
<dbReference type="FunFam" id="2.60.40.60:FF:000002">
    <property type="entry name" value="Protocadherin alpha 2"/>
    <property type="match status" value="1"/>
</dbReference>
<dbReference type="FunFam" id="2.60.40.60:FF:000007">
    <property type="entry name" value="Protocadherin alpha 2"/>
    <property type="match status" value="1"/>
</dbReference>
<dbReference type="FunFam" id="2.60.40.60:FF:000042">
    <property type="entry name" value="protocadherin-19 isoform X1"/>
    <property type="match status" value="1"/>
</dbReference>
<dbReference type="FunFam" id="2.60.40.60:FF:000088">
    <property type="entry name" value="protocadherin-19 isoform X2"/>
    <property type="match status" value="1"/>
</dbReference>
<dbReference type="FunFam" id="2.60.40.60:FF:000099">
    <property type="entry name" value="protocadherin-19 isoform X2"/>
    <property type="match status" value="1"/>
</dbReference>
<dbReference type="Gene3D" id="2.60.40.60">
    <property type="entry name" value="Cadherins"/>
    <property type="match status" value="6"/>
</dbReference>
<dbReference type="InterPro" id="IPR002126">
    <property type="entry name" value="Cadherin-like_dom"/>
</dbReference>
<dbReference type="InterPro" id="IPR015919">
    <property type="entry name" value="Cadherin-like_sf"/>
</dbReference>
<dbReference type="InterPro" id="IPR020894">
    <property type="entry name" value="Cadherin_CS"/>
</dbReference>
<dbReference type="InterPro" id="IPR013164">
    <property type="entry name" value="Cadherin_N"/>
</dbReference>
<dbReference type="InterPro" id="IPR050174">
    <property type="entry name" value="Protocadherin/Cadherin-CA"/>
</dbReference>
<dbReference type="PANTHER" id="PTHR24028">
    <property type="entry name" value="CADHERIN-87A"/>
    <property type="match status" value="1"/>
</dbReference>
<dbReference type="PANTHER" id="PTHR24028:SF40">
    <property type="entry name" value="PROTOCADHERIN-19"/>
    <property type="match status" value="1"/>
</dbReference>
<dbReference type="Pfam" id="PF00028">
    <property type="entry name" value="Cadherin"/>
    <property type="match status" value="5"/>
</dbReference>
<dbReference type="Pfam" id="PF08266">
    <property type="entry name" value="Cadherin_2"/>
    <property type="match status" value="1"/>
</dbReference>
<dbReference type="PRINTS" id="PR00205">
    <property type="entry name" value="CADHERIN"/>
</dbReference>
<dbReference type="SMART" id="SM00112">
    <property type="entry name" value="CA"/>
    <property type="match status" value="6"/>
</dbReference>
<dbReference type="SUPFAM" id="SSF49313">
    <property type="entry name" value="Cadherin-like"/>
    <property type="match status" value="5"/>
</dbReference>
<dbReference type="PROSITE" id="PS00232">
    <property type="entry name" value="CADHERIN_1"/>
    <property type="match status" value="5"/>
</dbReference>
<dbReference type="PROSITE" id="PS50268">
    <property type="entry name" value="CADHERIN_2"/>
    <property type="match status" value="6"/>
</dbReference>
<gene>
    <name type="primary">Pcdh19</name>
    <name type="synonym">Kiaa1313</name>
</gene>
<comment type="function">
    <text evidence="1">Calcium-dependent cell-adhesion protein.</text>
</comment>
<comment type="subunit">
    <text evidence="1">Homodimer; antiparallel.</text>
</comment>
<comment type="subcellular location">
    <subcellularLocation>
        <location evidence="1">Cell membrane</location>
        <topology evidence="2">Single-pass type I membrane protein</topology>
    </subcellularLocation>
</comment>
<comment type="sequence caution" evidence="5">
    <conflict type="frameshift">
        <sequence resource="EMBL-CDS" id="BAC32847"/>
    </conflict>
</comment>
<organism>
    <name type="scientific">Mus musculus</name>
    <name type="common">Mouse</name>
    <dbReference type="NCBI Taxonomy" id="10090"/>
    <lineage>
        <taxon>Eukaryota</taxon>
        <taxon>Metazoa</taxon>
        <taxon>Chordata</taxon>
        <taxon>Craniata</taxon>
        <taxon>Vertebrata</taxon>
        <taxon>Euteleostomi</taxon>
        <taxon>Mammalia</taxon>
        <taxon>Eutheria</taxon>
        <taxon>Euarchontoglires</taxon>
        <taxon>Glires</taxon>
        <taxon>Rodentia</taxon>
        <taxon>Myomorpha</taxon>
        <taxon>Muroidea</taxon>
        <taxon>Muridae</taxon>
        <taxon>Murinae</taxon>
        <taxon>Mus</taxon>
        <taxon>Mus</taxon>
    </lineage>
</organism>
<keyword id="KW-0106">Calcium</keyword>
<keyword id="KW-0130">Cell adhesion</keyword>
<keyword id="KW-1003">Cell membrane</keyword>
<keyword id="KW-1015">Disulfide bond</keyword>
<keyword id="KW-0325">Glycoprotein</keyword>
<keyword id="KW-0472">Membrane</keyword>
<keyword id="KW-0479">Metal-binding</keyword>
<keyword id="KW-1185">Reference proteome</keyword>
<keyword id="KW-0677">Repeat</keyword>
<keyword id="KW-0732">Signal</keyword>
<keyword id="KW-0812">Transmembrane</keyword>
<keyword id="KW-1133">Transmembrane helix</keyword>
<proteinExistence type="evidence at protein level"/>
<sequence length="1145" mass="126035">MESLLLPVLLLLAVLWTQAAALINLKYSVEEEQRAGTVIANVAKDAREAGFALDPRQASAFRVVSNSAPHLVDINPSSGLLVTKQKIDRDLLCRQSPKCIISLEVMSSSMEICVIKVEIKDLNDNAPSFPAAQIELEISEAASPGTRIPLDSAYDPDSGSFGVQTYELTPNELFGLEIKTRGDGSRFAELVVEKSLDRETQSHYSFRITALDGGDPPHMGTVGLSIKVTDSNDNNPVFGESTYSVSVPENSPPNTPVIRLNASDPDEGTNGQVVYSFYGYVNDRTRELFQIDPHSGLVTVTGALDYEEGHVYELDVQAKDLGPNSIPAHCKVTVSVLDTNDNPPIINLLSVNSELVEVSESAPPGYVIALVRVSDRDSGLNGRVQCRLLGNVPFRLQEYESFSTILVDGRLDREQHDQYNLTIQARDSGVPMLQSAKSFTVRITDENDNHPHFSKPYYQVIVQENNTPGAYLLSVSARDPDMGLNGSVSYQIVPSQVRDMPVFTYVSINPNSGDIYALRSFNHEQTKAFEFKVLAKDGGLPSLQSNATVRVIILDVNDNTPVITAPPLINGTAEVYIPRNSGIGYLVTVVKADDYDEGENGRVTYDMTEGDRGFFEIDQVNGEVRTTRTFNENSKPSYELIVVAHDHGKTSLSASALVLIYLSPALDAQESMGSVNLSLIFIIALGSIAGILFVTMIFVAIKCKRDNKEIRTYNCSNCLTITCLLGCFIKGQNSKCLHCISVSPNSEEQDKKAEEKVSLRGKRIAEYSYGHQKKSSKKKKISKNDIRLVPRDVEETDKMNVVSCSSLTSSLNYFDYHQQTLPLGCRRSESTFLNVENQNTRNTTASHIYHHSFNSQGPQQPDLIINGVPLPETENYSFDSNYVNSRAHLIKSSSTFKDLEGNSLKDSGHEESDQTDSEHDVQRSLYCDTAVNDVLNTSVTSMGSQMPDHDQNEGFHCREECRILGHSDRCWMPRNPMPTRSKSPEHVRNIIALSIEATAADVEAYDDCGPTKRTFATFGKDVSSHRAEERPILKGKRTVDVTICSPKVNSAIREAGNGCEAISPVTSPLHLKSPLPTKPSISYTVALAPPAHDLEHHANSGASRPSEAEPRGADNEKVMHEVNPIRKDGRDKESPSVKRLKDIVL</sequence>
<reference key="1">
    <citation type="journal article" date="2009" name="PLoS Biol.">
        <title>Lineage-specific biology revealed by a finished genome assembly of the mouse.</title>
        <authorList>
            <person name="Church D.M."/>
            <person name="Goodstadt L."/>
            <person name="Hillier L.W."/>
            <person name="Zody M.C."/>
            <person name="Goldstein S."/>
            <person name="She X."/>
            <person name="Bult C.J."/>
            <person name="Agarwala R."/>
            <person name="Cherry J.L."/>
            <person name="DiCuccio M."/>
            <person name="Hlavina W."/>
            <person name="Kapustin Y."/>
            <person name="Meric P."/>
            <person name="Maglott D."/>
            <person name="Birtle Z."/>
            <person name="Marques A.C."/>
            <person name="Graves T."/>
            <person name="Zhou S."/>
            <person name="Teague B."/>
            <person name="Potamousis K."/>
            <person name="Churas C."/>
            <person name="Place M."/>
            <person name="Herschleb J."/>
            <person name="Runnheim R."/>
            <person name="Forrest D."/>
            <person name="Amos-Landgraf J."/>
            <person name="Schwartz D.C."/>
            <person name="Cheng Z."/>
            <person name="Lindblad-Toh K."/>
            <person name="Eichler E.E."/>
            <person name="Ponting C.P."/>
        </authorList>
    </citation>
    <scope>NUCLEOTIDE SEQUENCE [LARGE SCALE GENOMIC DNA]</scope>
    <source>
        <strain>C57BL/6J</strain>
    </source>
</reference>
<reference key="2">
    <citation type="journal article" date="2005" name="Science">
        <title>The transcriptional landscape of the mammalian genome.</title>
        <authorList>
            <person name="Carninci P."/>
            <person name="Kasukawa T."/>
            <person name="Katayama S."/>
            <person name="Gough J."/>
            <person name="Frith M.C."/>
            <person name="Maeda N."/>
            <person name="Oyama R."/>
            <person name="Ravasi T."/>
            <person name="Lenhard B."/>
            <person name="Wells C."/>
            <person name="Kodzius R."/>
            <person name="Shimokawa K."/>
            <person name="Bajic V.B."/>
            <person name="Brenner S.E."/>
            <person name="Batalov S."/>
            <person name="Forrest A.R."/>
            <person name="Zavolan M."/>
            <person name="Davis M.J."/>
            <person name="Wilming L.G."/>
            <person name="Aidinis V."/>
            <person name="Allen J.E."/>
            <person name="Ambesi-Impiombato A."/>
            <person name="Apweiler R."/>
            <person name="Aturaliya R.N."/>
            <person name="Bailey T.L."/>
            <person name="Bansal M."/>
            <person name="Baxter L."/>
            <person name="Beisel K.W."/>
            <person name="Bersano T."/>
            <person name="Bono H."/>
            <person name="Chalk A.M."/>
            <person name="Chiu K.P."/>
            <person name="Choudhary V."/>
            <person name="Christoffels A."/>
            <person name="Clutterbuck D.R."/>
            <person name="Crowe M.L."/>
            <person name="Dalla E."/>
            <person name="Dalrymple B.P."/>
            <person name="de Bono B."/>
            <person name="Della Gatta G."/>
            <person name="di Bernardo D."/>
            <person name="Down T."/>
            <person name="Engstrom P."/>
            <person name="Fagiolini M."/>
            <person name="Faulkner G."/>
            <person name="Fletcher C.F."/>
            <person name="Fukushima T."/>
            <person name="Furuno M."/>
            <person name="Futaki S."/>
            <person name="Gariboldi M."/>
            <person name="Georgii-Hemming P."/>
            <person name="Gingeras T.R."/>
            <person name="Gojobori T."/>
            <person name="Green R.E."/>
            <person name="Gustincich S."/>
            <person name="Harbers M."/>
            <person name="Hayashi Y."/>
            <person name="Hensch T.K."/>
            <person name="Hirokawa N."/>
            <person name="Hill D."/>
            <person name="Huminiecki L."/>
            <person name="Iacono M."/>
            <person name="Ikeo K."/>
            <person name="Iwama A."/>
            <person name="Ishikawa T."/>
            <person name="Jakt M."/>
            <person name="Kanapin A."/>
            <person name="Katoh M."/>
            <person name="Kawasawa Y."/>
            <person name="Kelso J."/>
            <person name="Kitamura H."/>
            <person name="Kitano H."/>
            <person name="Kollias G."/>
            <person name="Krishnan S.P."/>
            <person name="Kruger A."/>
            <person name="Kummerfeld S.K."/>
            <person name="Kurochkin I.V."/>
            <person name="Lareau L.F."/>
            <person name="Lazarevic D."/>
            <person name="Lipovich L."/>
            <person name="Liu J."/>
            <person name="Liuni S."/>
            <person name="McWilliam S."/>
            <person name="Madan Babu M."/>
            <person name="Madera M."/>
            <person name="Marchionni L."/>
            <person name="Matsuda H."/>
            <person name="Matsuzawa S."/>
            <person name="Miki H."/>
            <person name="Mignone F."/>
            <person name="Miyake S."/>
            <person name="Morris K."/>
            <person name="Mottagui-Tabar S."/>
            <person name="Mulder N."/>
            <person name="Nakano N."/>
            <person name="Nakauchi H."/>
            <person name="Ng P."/>
            <person name="Nilsson R."/>
            <person name="Nishiguchi S."/>
            <person name="Nishikawa S."/>
            <person name="Nori F."/>
            <person name="Ohara O."/>
            <person name="Okazaki Y."/>
            <person name="Orlando V."/>
            <person name="Pang K.C."/>
            <person name="Pavan W.J."/>
            <person name="Pavesi G."/>
            <person name="Pesole G."/>
            <person name="Petrovsky N."/>
            <person name="Piazza S."/>
            <person name="Reed J."/>
            <person name="Reid J.F."/>
            <person name="Ring B.Z."/>
            <person name="Ringwald M."/>
            <person name="Rost B."/>
            <person name="Ruan Y."/>
            <person name="Salzberg S.L."/>
            <person name="Sandelin A."/>
            <person name="Schneider C."/>
            <person name="Schoenbach C."/>
            <person name="Sekiguchi K."/>
            <person name="Semple C.A."/>
            <person name="Seno S."/>
            <person name="Sessa L."/>
            <person name="Sheng Y."/>
            <person name="Shibata Y."/>
            <person name="Shimada H."/>
            <person name="Shimada K."/>
            <person name="Silva D."/>
            <person name="Sinclair B."/>
            <person name="Sperling S."/>
            <person name="Stupka E."/>
            <person name="Sugiura K."/>
            <person name="Sultana R."/>
            <person name="Takenaka Y."/>
            <person name="Taki K."/>
            <person name="Tammoja K."/>
            <person name="Tan S.L."/>
            <person name="Tang S."/>
            <person name="Taylor M.S."/>
            <person name="Tegner J."/>
            <person name="Teichmann S.A."/>
            <person name="Ueda H.R."/>
            <person name="van Nimwegen E."/>
            <person name="Verardo R."/>
            <person name="Wei C.L."/>
            <person name="Yagi K."/>
            <person name="Yamanishi H."/>
            <person name="Zabarovsky E."/>
            <person name="Zhu S."/>
            <person name="Zimmer A."/>
            <person name="Hide W."/>
            <person name="Bult C."/>
            <person name="Grimmond S.M."/>
            <person name="Teasdale R.D."/>
            <person name="Liu E.T."/>
            <person name="Brusic V."/>
            <person name="Quackenbush J."/>
            <person name="Wahlestedt C."/>
            <person name="Mattick J.S."/>
            <person name="Hume D.A."/>
            <person name="Kai C."/>
            <person name="Sasaki D."/>
            <person name="Tomaru Y."/>
            <person name="Fukuda S."/>
            <person name="Kanamori-Katayama M."/>
            <person name="Suzuki M."/>
            <person name="Aoki J."/>
            <person name="Arakawa T."/>
            <person name="Iida J."/>
            <person name="Imamura K."/>
            <person name="Itoh M."/>
            <person name="Kato T."/>
            <person name="Kawaji H."/>
            <person name="Kawagashira N."/>
            <person name="Kawashima T."/>
            <person name="Kojima M."/>
            <person name="Kondo S."/>
            <person name="Konno H."/>
            <person name="Nakano K."/>
            <person name="Ninomiya N."/>
            <person name="Nishio T."/>
            <person name="Okada M."/>
            <person name="Plessy C."/>
            <person name="Shibata K."/>
            <person name="Shiraki T."/>
            <person name="Suzuki S."/>
            <person name="Tagami M."/>
            <person name="Waki K."/>
            <person name="Watahiki A."/>
            <person name="Okamura-Oho Y."/>
            <person name="Suzuki H."/>
            <person name="Kawai J."/>
            <person name="Hayashizaki Y."/>
        </authorList>
    </citation>
    <scope>NUCLEOTIDE SEQUENCE [LARGE SCALE MRNA] OF 1-776</scope>
    <source>
        <strain>C57BL/6J</strain>
        <tissue>Brain cortex</tissue>
    </source>
</reference>
<reference key="3">
    <citation type="journal article" date="2003" name="DNA Res.">
        <title>Prediction of the coding sequences of mouse homologues of KIAA gene: II. The complete nucleotide sequences of 400 mouse KIAA-homologous cDNAs identified by screening of terminal sequences of cDNA clones randomly sampled from size-fractionated libraries.</title>
        <authorList>
            <person name="Okazaki N."/>
            <person name="Kikuno R."/>
            <person name="Ohara R."/>
            <person name="Inamoto S."/>
            <person name="Aizawa H."/>
            <person name="Yuasa S."/>
            <person name="Nakajima D."/>
            <person name="Nagase T."/>
            <person name="Ohara O."/>
            <person name="Koga H."/>
        </authorList>
    </citation>
    <scope>NUCLEOTIDE SEQUENCE [LARGE SCALE MRNA] OF 177-1145</scope>
    <source>
        <tissue>Brain</tissue>
    </source>
</reference>
<reference key="4">
    <citation type="journal article" date="2010" name="Cell">
        <title>A tissue-specific atlas of mouse protein phosphorylation and expression.</title>
        <authorList>
            <person name="Huttlin E.L."/>
            <person name="Jedrychowski M.P."/>
            <person name="Elias J.E."/>
            <person name="Goswami T."/>
            <person name="Rad R."/>
            <person name="Beausoleil S.A."/>
            <person name="Villen J."/>
            <person name="Haas W."/>
            <person name="Sowa M.E."/>
            <person name="Gygi S.P."/>
        </authorList>
    </citation>
    <scope>IDENTIFICATION BY MASS SPECTROMETRY [LARGE SCALE ANALYSIS]</scope>
    <source>
        <tissue>Brain</tissue>
    </source>
</reference>